<feature type="chain" id="PRO_1000000786" description="Adenylosuccinate synthetase">
    <location>
        <begin position="1"/>
        <end position="448"/>
    </location>
</feature>
<feature type="active site" description="Proton acceptor" evidence="1">
    <location>
        <position position="23"/>
    </location>
</feature>
<feature type="active site" description="Proton donor" evidence="1">
    <location>
        <position position="51"/>
    </location>
</feature>
<feature type="binding site" evidence="1">
    <location>
        <begin position="22"/>
        <end position="28"/>
    </location>
    <ligand>
        <name>GTP</name>
        <dbReference type="ChEBI" id="CHEBI:37565"/>
    </ligand>
</feature>
<feature type="binding site" description="in other chain" evidence="1">
    <location>
        <begin position="23"/>
        <end position="26"/>
    </location>
    <ligand>
        <name>IMP</name>
        <dbReference type="ChEBI" id="CHEBI:58053"/>
        <note>ligand shared between dimeric partners</note>
    </ligand>
</feature>
<feature type="binding site" evidence="1">
    <location>
        <position position="23"/>
    </location>
    <ligand>
        <name>Mg(2+)</name>
        <dbReference type="ChEBI" id="CHEBI:18420"/>
    </ligand>
</feature>
<feature type="binding site" description="in other chain" evidence="1">
    <location>
        <begin position="48"/>
        <end position="51"/>
    </location>
    <ligand>
        <name>IMP</name>
        <dbReference type="ChEBI" id="CHEBI:58053"/>
        <note>ligand shared between dimeric partners</note>
    </ligand>
</feature>
<feature type="binding site" evidence="1">
    <location>
        <begin position="50"/>
        <end position="52"/>
    </location>
    <ligand>
        <name>GTP</name>
        <dbReference type="ChEBI" id="CHEBI:37565"/>
    </ligand>
</feature>
<feature type="binding site" evidence="1">
    <location>
        <position position="50"/>
    </location>
    <ligand>
        <name>Mg(2+)</name>
        <dbReference type="ChEBI" id="CHEBI:18420"/>
    </ligand>
</feature>
<feature type="binding site" description="in other chain" evidence="1">
    <location>
        <position position="139"/>
    </location>
    <ligand>
        <name>IMP</name>
        <dbReference type="ChEBI" id="CHEBI:58053"/>
        <note>ligand shared between dimeric partners</note>
    </ligand>
</feature>
<feature type="binding site" evidence="1">
    <location>
        <position position="153"/>
    </location>
    <ligand>
        <name>IMP</name>
        <dbReference type="ChEBI" id="CHEBI:58053"/>
        <note>ligand shared between dimeric partners</note>
    </ligand>
</feature>
<feature type="binding site" description="in other chain" evidence="1">
    <location>
        <position position="234"/>
    </location>
    <ligand>
        <name>IMP</name>
        <dbReference type="ChEBI" id="CHEBI:58053"/>
        <note>ligand shared between dimeric partners</note>
    </ligand>
</feature>
<feature type="binding site" description="in other chain" evidence="1">
    <location>
        <position position="249"/>
    </location>
    <ligand>
        <name>IMP</name>
        <dbReference type="ChEBI" id="CHEBI:58053"/>
        <note>ligand shared between dimeric partners</note>
    </ligand>
</feature>
<feature type="binding site" evidence="1">
    <location>
        <begin position="317"/>
        <end position="323"/>
    </location>
    <ligand>
        <name>substrate</name>
    </ligand>
</feature>
<feature type="binding site" description="in other chain" evidence="1">
    <location>
        <position position="321"/>
    </location>
    <ligand>
        <name>IMP</name>
        <dbReference type="ChEBI" id="CHEBI:58053"/>
        <note>ligand shared between dimeric partners</note>
    </ligand>
</feature>
<feature type="binding site" evidence="1">
    <location>
        <position position="323"/>
    </location>
    <ligand>
        <name>GTP</name>
        <dbReference type="ChEBI" id="CHEBI:37565"/>
    </ligand>
</feature>
<feature type="binding site" evidence="1">
    <location>
        <begin position="349"/>
        <end position="351"/>
    </location>
    <ligand>
        <name>GTP</name>
        <dbReference type="ChEBI" id="CHEBI:37565"/>
    </ligand>
</feature>
<feature type="binding site" evidence="1">
    <location>
        <begin position="431"/>
        <end position="433"/>
    </location>
    <ligand>
        <name>GTP</name>
        <dbReference type="ChEBI" id="CHEBI:37565"/>
    </ligand>
</feature>
<accession>A3MK63</accession>
<keyword id="KW-0963">Cytoplasm</keyword>
<keyword id="KW-0342">GTP-binding</keyword>
<keyword id="KW-0436">Ligase</keyword>
<keyword id="KW-0460">Magnesium</keyword>
<keyword id="KW-0479">Metal-binding</keyword>
<keyword id="KW-0547">Nucleotide-binding</keyword>
<keyword id="KW-0658">Purine biosynthesis</keyword>
<sequence length="448" mass="48345">MSASAVNVTPGRNVVVVGTQWGDEGKGKIVDWLTDHAQGVVRFQGGHNAGHTLIIGGKKTILRLIPSGIMREGVACYIGNGVVLSPEALFKEIGELEEAGLSVRERLFISEATTLILPYHIAIDQAREARRGAGKIGTTGRGIGPAYEDKVGRRALRVQDLFDARTFADRLRENLDFHNFVLTQYLGGAAVDFQATLDTMLGYADRLKPMVTDVSRRLYEENHAGRNLLFEGAQGTLLDIDHGTYPFVTSSNCVAGAAAAGAGVGPQKLDYILGITKAYCTRVGSGPFPSELYDADNPSRQDQIGITLANVGKEFGSVTGRPRRTGWLDAAALRRSIQINGVSGLCMTKLDVLDGLDEVKLCVGYKIDGEDVDLLPRGAAEVARCEPVYETFGGWKESTVGIDSWDALPANARAYLTRVQEVAGVPIDMVSTGPDRDETILLRHPFKV</sequence>
<comment type="function">
    <text evidence="1">Plays an important role in the de novo pathway of purine nucleotide biosynthesis. Catalyzes the first committed step in the biosynthesis of AMP from IMP.</text>
</comment>
<comment type="catalytic activity">
    <reaction evidence="1">
        <text>IMP + L-aspartate + GTP = N(6)-(1,2-dicarboxyethyl)-AMP + GDP + phosphate + 2 H(+)</text>
        <dbReference type="Rhea" id="RHEA:15753"/>
        <dbReference type="ChEBI" id="CHEBI:15378"/>
        <dbReference type="ChEBI" id="CHEBI:29991"/>
        <dbReference type="ChEBI" id="CHEBI:37565"/>
        <dbReference type="ChEBI" id="CHEBI:43474"/>
        <dbReference type="ChEBI" id="CHEBI:57567"/>
        <dbReference type="ChEBI" id="CHEBI:58053"/>
        <dbReference type="ChEBI" id="CHEBI:58189"/>
        <dbReference type="EC" id="6.3.4.4"/>
    </reaction>
</comment>
<comment type="cofactor">
    <cofactor evidence="1">
        <name>Mg(2+)</name>
        <dbReference type="ChEBI" id="CHEBI:18420"/>
    </cofactor>
    <text evidence="1">Binds 1 Mg(2+) ion per subunit.</text>
</comment>
<comment type="pathway">
    <text evidence="1">Purine metabolism; AMP biosynthesis via de novo pathway; AMP from IMP: step 1/2.</text>
</comment>
<comment type="subunit">
    <text evidence="1">Homodimer.</text>
</comment>
<comment type="subcellular location">
    <subcellularLocation>
        <location evidence="1">Cytoplasm</location>
    </subcellularLocation>
</comment>
<comment type="similarity">
    <text evidence="1">Belongs to the adenylosuccinate synthetase family.</text>
</comment>
<dbReference type="EC" id="6.3.4.4" evidence="1"/>
<dbReference type="EMBL" id="CP000548">
    <property type="protein sequence ID" value="ABO06444.1"/>
    <property type="molecule type" value="Genomic_DNA"/>
</dbReference>
<dbReference type="RefSeq" id="WP_004193462.1">
    <property type="nucleotide sequence ID" value="NZ_CP007802.1"/>
</dbReference>
<dbReference type="SMR" id="A3MK63"/>
<dbReference type="KEGG" id="bmaz:BM44_2001"/>
<dbReference type="KEGG" id="bmn:BMA10247_1095"/>
<dbReference type="PATRIC" id="fig|320389.8.peg.2246"/>
<dbReference type="UniPathway" id="UPA00075">
    <property type="reaction ID" value="UER00335"/>
</dbReference>
<dbReference type="GO" id="GO:0005737">
    <property type="term" value="C:cytoplasm"/>
    <property type="evidence" value="ECO:0007669"/>
    <property type="project" value="UniProtKB-SubCell"/>
</dbReference>
<dbReference type="GO" id="GO:0004019">
    <property type="term" value="F:adenylosuccinate synthase activity"/>
    <property type="evidence" value="ECO:0007669"/>
    <property type="project" value="UniProtKB-UniRule"/>
</dbReference>
<dbReference type="GO" id="GO:0005525">
    <property type="term" value="F:GTP binding"/>
    <property type="evidence" value="ECO:0007669"/>
    <property type="project" value="UniProtKB-UniRule"/>
</dbReference>
<dbReference type="GO" id="GO:0000287">
    <property type="term" value="F:magnesium ion binding"/>
    <property type="evidence" value="ECO:0007669"/>
    <property type="project" value="UniProtKB-UniRule"/>
</dbReference>
<dbReference type="GO" id="GO:0044208">
    <property type="term" value="P:'de novo' AMP biosynthetic process"/>
    <property type="evidence" value="ECO:0007669"/>
    <property type="project" value="UniProtKB-UniRule"/>
</dbReference>
<dbReference type="GO" id="GO:0046040">
    <property type="term" value="P:IMP metabolic process"/>
    <property type="evidence" value="ECO:0007669"/>
    <property type="project" value="TreeGrafter"/>
</dbReference>
<dbReference type="CDD" id="cd03108">
    <property type="entry name" value="AdSS"/>
    <property type="match status" value="1"/>
</dbReference>
<dbReference type="FunFam" id="1.10.300.10:FF:000001">
    <property type="entry name" value="Adenylosuccinate synthetase"/>
    <property type="match status" value="1"/>
</dbReference>
<dbReference type="FunFam" id="3.90.170.10:FF:000001">
    <property type="entry name" value="Adenylosuccinate synthetase"/>
    <property type="match status" value="1"/>
</dbReference>
<dbReference type="Gene3D" id="3.40.440.10">
    <property type="entry name" value="Adenylosuccinate Synthetase, subunit A, domain 1"/>
    <property type="match status" value="1"/>
</dbReference>
<dbReference type="Gene3D" id="1.10.300.10">
    <property type="entry name" value="Adenylosuccinate Synthetase, subunit A, domain 2"/>
    <property type="match status" value="1"/>
</dbReference>
<dbReference type="Gene3D" id="3.90.170.10">
    <property type="entry name" value="Adenylosuccinate Synthetase, subunit A, domain 3"/>
    <property type="match status" value="1"/>
</dbReference>
<dbReference type="HAMAP" id="MF_00011">
    <property type="entry name" value="Adenylosucc_synth"/>
    <property type="match status" value="1"/>
</dbReference>
<dbReference type="InterPro" id="IPR018220">
    <property type="entry name" value="Adenylosuccin_syn_GTP-bd"/>
</dbReference>
<dbReference type="InterPro" id="IPR033128">
    <property type="entry name" value="Adenylosuccin_syn_Lys_AS"/>
</dbReference>
<dbReference type="InterPro" id="IPR042109">
    <property type="entry name" value="Adenylosuccinate_synth_dom1"/>
</dbReference>
<dbReference type="InterPro" id="IPR042110">
    <property type="entry name" value="Adenylosuccinate_synth_dom2"/>
</dbReference>
<dbReference type="InterPro" id="IPR042111">
    <property type="entry name" value="Adenylosuccinate_synth_dom3"/>
</dbReference>
<dbReference type="InterPro" id="IPR001114">
    <property type="entry name" value="Adenylosuccinate_synthetase"/>
</dbReference>
<dbReference type="InterPro" id="IPR027417">
    <property type="entry name" value="P-loop_NTPase"/>
</dbReference>
<dbReference type="NCBIfam" id="NF002223">
    <property type="entry name" value="PRK01117.1"/>
    <property type="match status" value="1"/>
</dbReference>
<dbReference type="NCBIfam" id="TIGR00184">
    <property type="entry name" value="purA"/>
    <property type="match status" value="1"/>
</dbReference>
<dbReference type="PANTHER" id="PTHR11846">
    <property type="entry name" value="ADENYLOSUCCINATE SYNTHETASE"/>
    <property type="match status" value="1"/>
</dbReference>
<dbReference type="PANTHER" id="PTHR11846:SF0">
    <property type="entry name" value="ADENYLOSUCCINATE SYNTHETASE"/>
    <property type="match status" value="1"/>
</dbReference>
<dbReference type="Pfam" id="PF00709">
    <property type="entry name" value="Adenylsucc_synt"/>
    <property type="match status" value="1"/>
</dbReference>
<dbReference type="SMART" id="SM00788">
    <property type="entry name" value="Adenylsucc_synt"/>
    <property type="match status" value="1"/>
</dbReference>
<dbReference type="SUPFAM" id="SSF52540">
    <property type="entry name" value="P-loop containing nucleoside triphosphate hydrolases"/>
    <property type="match status" value="1"/>
</dbReference>
<dbReference type="PROSITE" id="PS01266">
    <property type="entry name" value="ADENYLOSUCCIN_SYN_1"/>
    <property type="match status" value="1"/>
</dbReference>
<dbReference type="PROSITE" id="PS00513">
    <property type="entry name" value="ADENYLOSUCCIN_SYN_2"/>
    <property type="match status" value="1"/>
</dbReference>
<gene>
    <name evidence="1" type="primary">purA</name>
    <name type="ordered locus">BMA10247_1095</name>
</gene>
<evidence type="ECO:0000255" key="1">
    <source>
        <dbReference type="HAMAP-Rule" id="MF_00011"/>
    </source>
</evidence>
<organism>
    <name type="scientific">Burkholderia mallei (strain NCTC 10247)</name>
    <dbReference type="NCBI Taxonomy" id="320389"/>
    <lineage>
        <taxon>Bacteria</taxon>
        <taxon>Pseudomonadati</taxon>
        <taxon>Pseudomonadota</taxon>
        <taxon>Betaproteobacteria</taxon>
        <taxon>Burkholderiales</taxon>
        <taxon>Burkholderiaceae</taxon>
        <taxon>Burkholderia</taxon>
        <taxon>pseudomallei group</taxon>
    </lineage>
</organism>
<reference key="1">
    <citation type="journal article" date="2010" name="Genome Biol. Evol.">
        <title>Continuing evolution of Burkholderia mallei through genome reduction and large-scale rearrangements.</title>
        <authorList>
            <person name="Losada L."/>
            <person name="Ronning C.M."/>
            <person name="DeShazer D."/>
            <person name="Woods D."/>
            <person name="Fedorova N."/>
            <person name="Kim H.S."/>
            <person name="Shabalina S.A."/>
            <person name="Pearson T.R."/>
            <person name="Brinkac L."/>
            <person name="Tan P."/>
            <person name="Nandi T."/>
            <person name="Crabtree J."/>
            <person name="Badger J."/>
            <person name="Beckstrom-Sternberg S."/>
            <person name="Saqib M."/>
            <person name="Schutzer S.E."/>
            <person name="Keim P."/>
            <person name="Nierman W.C."/>
        </authorList>
    </citation>
    <scope>NUCLEOTIDE SEQUENCE [LARGE SCALE GENOMIC DNA]</scope>
    <source>
        <strain>NCTC 10247</strain>
    </source>
</reference>
<protein>
    <recommendedName>
        <fullName evidence="1">Adenylosuccinate synthetase</fullName>
        <shortName evidence="1">AMPSase</shortName>
        <shortName evidence="1">AdSS</shortName>
        <ecNumber evidence="1">6.3.4.4</ecNumber>
    </recommendedName>
    <alternativeName>
        <fullName evidence="1">IMP--aspartate ligase</fullName>
    </alternativeName>
</protein>
<proteinExistence type="inferred from homology"/>
<name>PURA_BURM7</name>